<feature type="chain" id="PRO_0000358711" description="NADH-quinone oxidoreductase subunit C/D">
    <location>
        <begin position="1"/>
        <end position="598"/>
    </location>
</feature>
<feature type="region of interest" description="NADH dehydrogenase I subunit C" evidence="1">
    <location>
        <begin position="1"/>
        <end position="189"/>
    </location>
</feature>
<feature type="region of interest" description="NADH dehydrogenase I subunit D" evidence="1">
    <location>
        <begin position="213"/>
        <end position="598"/>
    </location>
</feature>
<name>NUOCD_YERPB</name>
<proteinExistence type="inferred from homology"/>
<organism>
    <name type="scientific">Yersinia pseudotuberculosis serotype IB (strain PB1/+)</name>
    <dbReference type="NCBI Taxonomy" id="502801"/>
    <lineage>
        <taxon>Bacteria</taxon>
        <taxon>Pseudomonadati</taxon>
        <taxon>Pseudomonadota</taxon>
        <taxon>Gammaproteobacteria</taxon>
        <taxon>Enterobacterales</taxon>
        <taxon>Yersiniaceae</taxon>
        <taxon>Yersinia</taxon>
    </lineage>
</organism>
<comment type="function">
    <text evidence="1">NDH-1 shuttles electrons from NADH, via FMN and iron-sulfur (Fe-S) centers, to quinones in the respiratory chain. The immediate electron acceptor for the enzyme in this species is believed to be ubiquinone. Couples the redox reaction to proton translocation (for every two electrons transferred, four hydrogen ions are translocated across the cytoplasmic membrane), and thus conserves the redox energy in a proton gradient.</text>
</comment>
<comment type="catalytic activity">
    <reaction evidence="1">
        <text>a quinone + NADH + 5 H(+)(in) = a quinol + NAD(+) + 4 H(+)(out)</text>
        <dbReference type="Rhea" id="RHEA:57888"/>
        <dbReference type="ChEBI" id="CHEBI:15378"/>
        <dbReference type="ChEBI" id="CHEBI:24646"/>
        <dbReference type="ChEBI" id="CHEBI:57540"/>
        <dbReference type="ChEBI" id="CHEBI:57945"/>
        <dbReference type="ChEBI" id="CHEBI:132124"/>
    </reaction>
</comment>
<comment type="subunit">
    <text evidence="1">NDH-1 is composed of 13 different subunits. Subunits NuoB, CD, E, F, and G constitute the peripheral sector of the complex.</text>
</comment>
<comment type="subcellular location">
    <subcellularLocation>
        <location evidence="1">Cell inner membrane</location>
        <topology evidence="1">Peripheral membrane protein</topology>
        <orientation evidence="1">Cytoplasmic side</orientation>
    </subcellularLocation>
</comment>
<comment type="similarity">
    <text evidence="1">In the N-terminal section; belongs to the complex I 30 kDa subunit family.</text>
</comment>
<comment type="similarity">
    <text evidence="1">In the C-terminal section; belongs to the complex I 49 kDa subunit family.</text>
</comment>
<protein>
    <recommendedName>
        <fullName evidence="1">NADH-quinone oxidoreductase subunit C/D</fullName>
        <ecNumber evidence="1">7.1.1.-</ecNumber>
    </recommendedName>
    <alternativeName>
        <fullName evidence="1">NADH dehydrogenase I subunit C/D</fullName>
    </alternativeName>
    <alternativeName>
        <fullName evidence="1">NDH-1 subunit C/D</fullName>
    </alternativeName>
</protein>
<keyword id="KW-0997">Cell inner membrane</keyword>
<keyword id="KW-1003">Cell membrane</keyword>
<keyword id="KW-0472">Membrane</keyword>
<keyword id="KW-0511">Multifunctional enzyme</keyword>
<keyword id="KW-0520">NAD</keyword>
<keyword id="KW-0874">Quinone</keyword>
<keyword id="KW-1278">Translocase</keyword>
<keyword id="KW-0813">Transport</keyword>
<keyword id="KW-0830">Ubiquinone</keyword>
<dbReference type="EC" id="7.1.1.-" evidence="1"/>
<dbReference type="EMBL" id="CP001048">
    <property type="protein sequence ID" value="ACC89640.1"/>
    <property type="molecule type" value="Genomic_DNA"/>
</dbReference>
<dbReference type="RefSeq" id="WP_002210277.1">
    <property type="nucleotide sequence ID" value="NZ_CP009780.1"/>
</dbReference>
<dbReference type="SMR" id="B2K819"/>
<dbReference type="GeneID" id="57976136"/>
<dbReference type="KEGG" id="ypb:YPTS_2680"/>
<dbReference type="PATRIC" id="fig|502801.10.peg.2099"/>
<dbReference type="GO" id="GO:0030964">
    <property type="term" value="C:NADH dehydrogenase complex"/>
    <property type="evidence" value="ECO:0007669"/>
    <property type="project" value="InterPro"/>
</dbReference>
<dbReference type="GO" id="GO:0005886">
    <property type="term" value="C:plasma membrane"/>
    <property type="evidence" value="ECO:0007669"/>
    <property type="project" value="UniProtKB-SubCell"/>
</dbReference>
<dbReference type="GO" id="GO:0051287">
    <property type="term" value="F:NAD binding"/>
    <property type="evidence" value="ECO:0007669"/>
    <property type="project" value="InterPro"/>
</dbReference>
<dbReference type="GO" id="GO:0008137">
    <property type="term" value="F:NADH dehydrogenase (ubiquinone) activity"/>
    <property type="evidence" value="ECO:0007669"/>
    <property type="project" value="InterPro"/>
</dbReference>
<dbReference type="GO" id="GO:0050136">
    <property type="term" value="F:NADH:ubiquinone reductase (non-electrogenic) activity"/>
    <property type="evidence" value="ECO:0007669"/>
    <property type="project" value="UniProtKB-UniRule"/>
</dbReference>
<dbReference type="GO" id="GO:0048038">
    <property type="term" value="F:quinone binding"/>
    <property type="evidence" value="ECO:0007669"/>
    <property type="project" value="UniProtKB-KW"/>
</dbReference>
<dbReference type="FunFam" id="1.10.645.10:FF:000001">
    <property type="entry name" value="NADH-quinone oxidoreductase subunit C/D"/>
    <property type="match status" value="1"/>
</dbReference>
<dbReference type="FunFam" id="3.30.460.80:FF:000001">
    <property type="entry name" value="NADH-quinone oxidoreductase subunit C/D"/>
    <property type="match status" value="1"/>
</dbReference>
<dbReference type="Gene3D" id="1.10.645.10">
    <property type="entry name" value="Cytochrome-c3 Hydrogenase, chain B"/>
    <property type="match status" value="1"/>
</dbReference>
<dbReference type="Gene3D" id="3.30.460.80">
    <property type="entry name" value="NADH:ubiquinone oxidoreductase, 30kDa subunit"/>
    <property type="match status" value="1"/>
</dbReference>
<dbReference type="HAMAP" id="MF_01357">
    <property type="entry name" value="NDH1_NuoC"/>
    <property type="match status" value="1"/>
</dbReference>
<dbReference type="HAMAP" id="MF_01359">
    <property type="entry name" value="NDH1_NuoCD_1"/>
    <property type="match status" value="1"/>
</dbReference>
<dbReference type="HAMAP" id="MF_01358">
    <property type="entry name" value="NDH1_NuoD"/>
    <property type="match status" value="1"/>
</dbReference>
<dbReference type="InterPro" id="IPR010218">
    <property type="entry name" value="NADH_DH_suC"/>
</dbReference>
<dbReference type="InterPro" id="IPR023062">
    <property type="entry name" value="NADH_DH_suCD"/>
</dbReference>
<dbReference type="InterPro" id="IPR001135">
    <property type="entry name" value="NADH_Q_OxRdtase_suD"/>
</dbReference>
<dbReference type="InterPro" id="IPR037232">
    <property type="entry name" value="NADH_quin_OxRdtase_su_C/D-like"/>
</dbReference>
<dbReference type="InterPro" id="IPR001268">
    <property type="entry name" value="NADH_UbQ_OxRdtase_30kDa_su"/>
</dbReference>
<dbReference type="InterPro" id="IPR014029">
    <property type="entry name" value="NADH_UbQ_OxRdtase_49kDa_CS"/>
</dbReference>
<dbReference type="InterPro" id="IPR022885">
    <property type="entry name" value="NDH1_su_D/H"/>
</dbReference>
<dbReference type="InterPro" id="IPR029014">
    <property type="entry name" value="NiFe-Hase_large"/>
</dbReference>
<dbReference type="NCBIfam" id="TIGR01961">
    <property type="entry name" value="NuoC_fam"/>
    <property type="match status" value="1"/>
</dbReference>
<dbReference type="NCBIfam" id="TIGR01962">
    <property type="entry name" value="NuoD"/>
    <property type="match status" value="1"/>
</dbReference>
<dbReference type="NCBIfam" id="NF004739">
    <property type="entry name" value="PRK06075.1"/>
    <property type="match status" value="1"/>
</dbReference>
<dbReference type="NCBIfam" id="NF008728">
    <property type="entry name" value="PRK11742.1"/>
    <property type="match status" value="1"/>
</dbReference>
<dbReference type="PANTHER" id="PTHR11993:SF45">
    <property type="entry name" value="NADH-QUINONE OXIDOREDUCTASE SUBUNIT C_D"/>
    <property type="match status" value="1"/>
</dbReference>
<dbReference type="PANTHER" id="PTHR11993">
    <property type="entry name" value="NADH-UBIQUINONE OXIDOREDUCTASE 49 KDA SUBUNIT"/>
    <property type="match status" value="1"/>
</dbReference>
<dbReference type="Pfam" id="PF00329">
    <property type="entry name" value="Complex1_30kDa"/>
    <property type="match status" value="1"/>
</dbReference>
<dbReference type="Pfam" id="PF00346">
    <property type="entry name" value="Complex1_49kDa"/>
    <property type="match status" value="1"/>
</dbReference>
<dbReference type="SUPFAM" id="SSF56762">
    <property type="entry name" value="HydB/Nqo4-like"/>
    <property type="match status" value="1"/>
</dbReference>
<dbReference type="SUPFAM" id="SSF143243">
    <property type="entry name" value="Nqo5-like"/>
    <property type="match status" value="1"/>
</dbReference>
<dbReference type="PROSITE" id="PS00535">
    <property type="entry name" value="COMPLEX1_49K"/>
    <property type="match status" value="1"/>
</dbReference>
<reference key="1">
    <citation type="submission" date="2008-04" db="EMBL/GenBank/DDBJ databases">
        <title>Complete sequence of Yersinia pseudotuberculosis PB1/+.</title>
        <authorList>
            <person name="Copeland A."/>
            <person name="Lucas S."/>
            <person name="Lapidus A."/>
            <person name="Glavina del Rio T."/>
            <person name="Dalin E."/>
            <person name="Tice H."/>
            <person name="Bruce D."/>
            <person name="Goodwin L."/>
            <person name="Pitluck S."/>
            <person name="Munk A.C."/>
            <person name="Brettin T."/>
            <person name="Detter J.C."/>
            <person name="Han C."/>
            <person name="Tapia R."/>
            <person name="Schmutz J."/>
            <person name="Larimer F."/>
            <person name="Land M."/>
            <person name="Hauser L."/>
            <person name="Challacombe J.F."/>
            <person name="Green L."/>
            <person name="Lindler L.E."/>
            <person name="Nikolich M.P."/>
            <person name="Richardson P."/>
        </authorList>
    </citation>
    <scope>NUCLEOTIDE SEQUENCE [LARGE SCALE GENOMIC DNA]</scope>
    <source>
        <strain>PB1/+</strain>
    </source>
</reference>
<gene>
    <name evidence="1" type="primary">nuoC</name>
    <name evidence="1" type="synonym">nuoCD</name>
    <name evidence="1" type="synonym">nuoD</name>
    <name type="ordered locus">YPTS_2680</name>
</gene>
<sequence>MTDLTTSDSLQPAWQTRDHLDDPVIGELSNRFGPEAFVVQATRTGMPVVWVKREQLLEVMSFLRKQPKPYVMLFDLHGVDERLRTHRQGLPDADFSVFYHLLSIERNRDIMLKVALSEKDLHVSTATKIFPNANWYERETWEMFGITFDGHPHLTRIMMPQSWEGHPLRKDYPARATEFDPYVLTKQKEDLEMESLTFKPEDWGMKRGTENEDFMFLNLGPNHPSSHGAFRIVLQLDGEEIIDCVPDVGYHHRGAEKMGERQSWHSYIPYTDRIEYLGGCVNEMPYVLAVEKLAGIVVPDRVNTIRVMLSELFRINSHLLYISTFIQDVGAMTPVFFAFTDRQKVYDVIEAITGFRMHPAWFRIGGVAHDLPRGWERLLRDFLDWMPKRLDSYVKAALQNSILKGRSVGVAAYNAKEALEWGVTGAGLRATGVEFDVRKWRPYSGYENFDFEVPVGNNGDCYDRVMLKVEELRQSLRILEQCYKNMPEGPFKADHPLTTPPPKERTLQHIETLITHFLQVSWGPVMPANESFQMIEATKGINSYYLTSDGSTMSYRTRIRTPSYAHLQQIPSVIRGSLVSDLIVYLGSIDFVMSDVDR</sequence>
<evidence type="ECO:0000255" key="1">
    <source>
        <dbReference type="HAMAP-Rule" id="MF_01359"/>
    </source>
</evidence>
<accession>B2K819</accession>